<keyword id="KW-1185">Reference proteome</keyword>
<keyword id="KW-0687">Ribonucleoprotein</keyword>
<keyword id="KW-0689">Ribosomal protein</keyword>
<keyword id="KW-0694">RNA-binding</keyword>
<keyword id="KW-0699">rRNA-binding</keyword>
<comment type="function">
    <text evidence="1">Binds the lower part of the 30S subunit head.</text>
</comment>
<comment type="subunit">
    <text evidence="1">Part of the 30S ribosomal subunit.</text>
</comment>
<comment type="similarity">
    <text evidence="1">Belongs to the universal ribosomal protein uS3 family.</text>
</comment>
<gene>
    <name evidence="1" type="primary">rps3</name>
    <name type="ordered locus">HQ_2836A</name>
</gene>
<proteinExistence type="inferred from homology"/>
<protein>
    <recommendedName>
        <fullName evidence="1">Small ribosomal subunit protein uS3</fullName>
    </recommendedName>
    <alternativeName>
        <fullName evidence="3">30S ribosomal protein S3</fullName>
    </alternativeName>
</protein>
<feature type="chain" id="PRO_0000293920" description="Small ribosomal subunit protein uS3">
    <location>
        <begin position="1"/>
        <end position="323"/>
    </location>
</feature>
<feature type="domain" description="KH type-2" evidence="1">
    <location>
        <begin position="17"/>
        <end position="86"/>
    </location>
</feature>
<feature type="region of interest" description="Disordered" evidence="2">
    <location>
        <begin position="251"/>
        <end position="303"/>
    </location>
</feature>
<feature type="compositionally biased region" description="Acidic residues" evidence="2">
    <location>
        <begin position="270"/>
        <end position="303"/>
    </location>
</feature>
<sequence length="323" mass="35079">MADEHQFIENGLQRSQIDEFFADELGRAGYGGMDVAKTPMGTQIVLKAEKPGMVIGKGGKNIRKVTRELEDRFNLDDPQIDVQEVDEPDLNARIVADRLANALERGWYFRKAGHTTIDRIIESGALGAEIVLSGKVTGARSRVEKFNRGYIKHNGEPAQEIVDEGQGVAVMKLGTIGVTVKIIPPGAELPDDFEIHDDVDVEPVEQVAESDGVDSLLAEDPADIPDVGADDDVTVPQETPEEIIDEEVVEADPGVSSEDEEVVTEPVDIGGDDEDVEDIEVVSDDSGNDTETVAEEVEELDAEVEAEAEDLVAEMEDIDEEDV</sequence>
<dbReference type="EMBL" id="AM180088">
    <property type="protein sequence ID" value="CAJ52943.1"/>
    <property type="molecule type" value="Genomic_DNA"/>
</dbReference>
<dbReference type="RefSeq" id="WP_011572056.1">
    <property type="nucleotide sequence ID" value="NC_008212.1"/>
</dbReference>
<dbReference type="SMR" id="Q18GF5"/>
<dbReference type="STRING" id="362976.HQ_2836A"/>
<dbReference type="GeneID" id="4194660"/>
<dbReference type="KEGG" id="hwa:HQ_2836A"/>
<dbReference type="eggNOG" id="arCOG04097">
    <property type="taxonomic scope" value="Archaea"/>
</dbReference>
<dbReference type="HOGENOM" id="CLU_058591_1_0_2"/>
<dbReference type="Proteomes" id="UP000001975">
    <property type="component" value="Chromosome"/>
</dbReference>
<dbReference type="GO" id="GO:0022627">
    <property type="term" value="C:cytosolic small ribosomal subunit"/>
    <property type="evidence" value="ECO:0007669"/>
    <property type="project" value="TreeGrafter"/>
</dbReference>
<dbReference type="GO" id="GO:0019843">
    <property type="term" value="F:rRNA binding"/>
    <property type="evidence" value="ECO:0007669"/>
    <property type="project" value="UniProtKB-UniRule"/>
</dbReference>
<dbReference type="GO" id="GO:0003735">
    <property type="term" value="F:structural constituent of ribosome"/>
    <property type="evidence" value="ECO:0007669"/>
    <property type="project" value="InterPro"/>
</dbReference>
<dbReference type="GO" id="GO:0006412">
    <property type="term" value="P:translation"/>
    <property type="evidence" value="ECO:0007669"/>
    <property type="project" value="UniProtKB-UniRule"/>
</dbReference>
<dbReference type="CDD" id="cd02411">
    <property type="entry name" value="KH-II_30S_S3_arch"/>
    <property type="match status" value="1"/>
</dbReference>
<dbReference type="FunFam" id="3.30.1140.32:FF:000012">
    <property type="entry name" value="30S ribosomal protein S3"/>
    <property type="match status" value="1"/>
</dbReference>
<dbReference type="FunFam" id="3.30.300.20:FF:000001">
    <property type="entry name" value="30S ribosomal protein S3"/>
    <property type="match status" value="1"/>
</dbReference>
<dbReference type="Gene3D" id="3.30.300.20">
    <property type="match status" value="1"/>
</dbReference>
<dbReference type="Gene3D" id="3.30.1140.32">
    <property type="entry name" value="Ribosomal protein S3, C-terminal domain"/>
    <property type="match status" value="1"/>
</dbReference>
<dbReference type="HAMAP" id="MF_01309_A">
    <property type="entry name" value="Ribosomal_uS3_A"/>
    <property type="match status" value="1"/>
</dbReference>
<dbReference type="InterPro" id="IPR004087">
    <property type="entry name" value="KH_dom"/>
</dbReference>
<dbReference type="InterPro" id="IPR015946">
    <property type="entry name" value="KH_dom-like_a/b"/>
</dbReference>
<dbReference type="InterPro" id="IPR004044">
    <property type="entry name" value="KH_dom_type_2"/>
</dbReference>
<dbReference type="InterPro" id="IPR009019">
    <property type="entry name" value="KH_sf_prok-type"/>
</dbReference>
<dbReference type="InterPro" id="IPR036419">
    <property type="entry name" value="Ribosomal_S3_C_sf"/>
</dbReference>
<dbReference type="InterPro" id="IPR027488">
    <property type="entry name" value="Ribosomal_uS3_arc"/>
</dbReference>
<dbReference type="InterPro" id="IPR001351">
    <property type="entry name" value="Ribosomal_uS3_C"/>
</dbReference>
<dbReference type="InterPro" id="IPR018280">
    <property type="entry name" value="Ribosomal_uS3_CS"/>
</dbReference>
<dbReference type="InterPro" id="IPR005703">
    <property type="entry name" value="Ribosomal_uS3_euk/arc"/>
</dbReference>
<dbReference type="NCBIfam" id="NF003219">
    <property type="entry name" value="PRK04191.1"/>
    <property type="match status" value="1"/>
</dbReference>
<dbReference type="NCBIfam" id="TIGR01008">
    <property type="entry name" value="uS3_euk_arch"/>
    <property type="match status" value="1"/>
</dbReference>
<dbReference type="PANTHER" id="PTHR11760">
    <property type="entry name" value="30S/40S RIBOSOMAL PROTEIN S3"/>
    <property type="match status" value="1"/>
</dbReference>
<dbReference type="PANTHER" id="PTHR11760:SF32">
    <property type="entry name" value="SMALL RIBOSOMAL SUBUNIT PROTEIN US3"/>
    <property type="match status" value="1"/>
</dbReference>
<dbReference type="Pfam" id="PF07650">
    <property type="entry name" value="KH_2"/>
    <property type="match status" value="1"/>
</dbReference>
<dbReference type="Pfam" id="PF00189">
    <property type="entry name" value="Ribosomal_S3_C"/>
    <property type="match status" value="1"/>
</dbReference>
<dbReference type="SMART" id="SM00322">
    <property type="entry name" value="KH"/>
    <property type="match status" value="1"/>
</dbReference>
<dbReference type="SUPFAM" id="SSF54814">
    <property type="entry name" value="Prokaryotic type KH domain (KH-domain type II)"/>
    <property type="match status" value="1"/>
</dbReference>
<dbReference type="SUPFAM" id="SSF54821">
    <property type="entry name" value="Ribosomal protein S3 C-terminal domain"/>
    <property type="match status" value="1"/>
</dbReference>
<dbReference type="PROSITE" id="PS50823">
    <property type="entry name" value="KH_TYPE_2"/>
    <property type="match status" value="1"/>
</dbReference>
<dbReference type="PROSITE" id="PS00548">
    <property type="entry name" value="RIBOSOMAL_S3"/>
    <property type="match status" value="1"/>
</dbReference>
<organism>
    <name type="scientific">Haloquadratum walsbyi (strain DSM 16790 / HBSQ001)</name>
    <dbReference type="NCBI Taxonomy" id="362976"/>
    <lineage>
        <taxon>Archaea</taxon>
        <taxon>Methanobacteriati</taxon>
        <taxon>Methanobacteriota</taxon>
        <taxon>Stenosarchaea group</taxon>
        <taxon>Halobacteria</taxon>
        <taxon>Halobacteriales</taxon>
        <taxon>Haloferacaceae</taxon>
        <taxon>Haloquadratum</taxon>
    </lineage>
</organism>
<reference key="1">
    <citation type="journal article" date="2006" name="BMC Genomics">
        <title>The genome of the square archaeon Haloquadratum walsbyi: life at the limits of water activity.</title>
        <authorList>
            <person name="Bolhuis H."/>
            <person name="Palm P."/>
            <person name="Wende A."/>
            <person name="Falb M."/>
            <person name="Rampp M."/>
            <person name="Rodriguez-Valera F."/>
            <person name="Pfeiffer F."/>
            <person name="Oesterhelt D."/>
        </authorList>
    </citation>
    <scope>NUCLEOTIDE SEQUENCE [LARGE SCALE GENOMIC DNA]</scope>
    <source>
        <strain>DSM 16790 / HBSQ001</strain>
    </source>
</reference>
<name>RS3_HALWD</name>
<evidence type="ECO:0000255" key="1">
    <source>
        <dbReference type="HAMAP-Rule" id="MF_01309"/>
    </source>
</evidence>
<evidence type="ECO:0000256" key="2">
    <source>
        <dbReference type="SAM" id="MobiDB-lite"/>
    </source>
</evidence>
<evidence type="ECO:0000305" key="3"/>
<accession>Q18GF5</accession>